<organism>
    <name type="scientific">Bacillus anthracis (strain CDC 684 / NRRL 3495)</name>
    <dbReference type="NCBI Taxonomy" id="568206"/>
    <lineage>
        <taxon>Bacteria</taxon>
        <taxon>Bacillati</taxon>
        <taxon>Bacillota</taxon>
        <taxon>Bacilli</taxon>
        <taxon>Bacillales</taxon>
        <taxon>Bacillaceae</taxon>
        <taxon>Bacillus</taxon>
        <taxon>Bacillus cereus group</taxon>
    </lineage>
</organism>
<protein>
    <recommendedName>
        <fullName evidence="1">Dihydroorotate dehydrogenase B (NAD(+)), electron transfer subunit</fullName>
    </recommendedName>
    <alternativeName>
        <fullName evidence="1">Dihydroorotate oxidase B, electron transfer subunit</fullName>
    </alternativeName>
</protein>
<keyword id="KW-0001">2Fe-2S</keyword>
<keyword id="KW-0249">Electron transport</keyword>
<keyword id="KW-0274">FAD</keyword>
<keyword id="KW-0285">Flavoprotein</keyword>
<keyword id="KW-0408">Iron</keyword>
<keyword id="KW-0411">Iron-sulfur</keyword>
<keyword id="KW-0479">Metal-binding</keyword>
<keyword id="KW-0665">Pyrimidine biosynthesis</keyword>
<keyword id="KW-0813">Transport</keyword>
<gene>
    <name evidence="1" type="primary">pyrK</name>
    <name type="ordered locus">BAMEG_0607</name>
</gene>
<accession>C3L741</accession>
<sequence>MMQKQNMIVVNQKEIAKNIYELVLQGTLVQQMNEPGQFVHIKVAEGIAPLLRRPISICNVDQEKNEFTMLYRAEGQGTKTLATRKQGEMVDVLGPLGHGFPVEEAEAGQTALLVGGGIGVPPLYELSQRLVAKGVRVIHILGFQTKDVVFYEEKFAELGDTYVATVDGTHGTKGFVTDVIDHYGIDFDILYSCGPLAMLRALEGRYKEKKAYISLEERMGCGIGACFACVCHLQEDPSGHSYKKVCSDGPVFPIGEVVL</sequence>
<name>PYRK_BACAC</name>
<reference key="1">
    <citation type="submission" date="2008-10" db="EMBL/GenBank/DDBJ databases">
        <title>Genome sequence of Bacillus anthracis str. CDC 684.</title>
        <authorList>
            <person name="Dodson R.J."/>
            <person name="Munk A.C."/>
            <person name="Brettin T."/>
            <person name="Bruce D."/>
            <person name="Detter C."/>
            <person name="Tapia R."/>
            <person name="Han C."/>
            <person name="Sutton G."/>
            <person name="Sims D."/>
        </authorList>
    </citation>
    <scope>NUCLEOTIDE SEQUENCE [LARGE SCALE GENOMIC DNA]</scope>
    <source>
        <strain>CDC 684 / NRRL 3495</strain>
    </source>
</reference>
<dbReference type="EMBL" id="CP001215">
    <property type="protein sequence ID" value="ACP15392.1"/>
    <property type="molecule type" value="Genomic_DNA"/>
</dbReference>
<dbReference type="RefSeq" id="WP_000983358.1">
    <property type="nucleotide sequence ID" value="NC_012581.1"/>
</dbReference>
<dbReference type="SMR" id="C3L741"/>
<dbReference type="GeneID" id="75087022"/>
<dbReference type="KEGG" id="bah:BAMEG_0607"/>
<dbReference type="HOGENOM" id="CLU_003827_1_2_9"/>
<dbReference type="UniPathway" id="UPA00070">
    <property type="reaction ID" value="UER00945"/>
</dbReference>
<dbReference type="GO" id="GO:0051537">
    <property type="term" value="F:2 iron, 2 sulfur cluster binding"/>
    <property type="evidence" value="ECO:0007669"/>
    <property type="project" value="UniProtKB-KW"/>
</dbReference>
<dbReference type="GO" id="GO:0009055">
    <property type="term" value="F:electron transfer activity"/>
    <property type="evidence" value="ECO:0007669"/>
    <property type="project" value="UniProtKB-UniRule"/>
</dbReference>
<dbReference type="GO" id="GO:0050660">
    <property type="term" value="F:flavin adenine dinucleotide binding"/>
    <property type="evidence" value="ECO:0007669"/>
    <property type="project" value="InterPro"/>
</dbReference>
<dbReference type="GO" id="GO:0046872">
    <property type="term" value="F:metal ion binding"/>
    <property type="evidence" value="ECO:0007669"/>
    <property type="project" value="UniProtKB-KW"/>
</dbReference>
<dbReference type="GO" id="GO:0016491">
    <property type="term" value="F:oxidoreductase activity"/>
    <property type="evidence" value="ECO:0007669"/>
    <property type="project" value="InterPro"/>
</dbReference>
<dbReference type="GO" id="GO:0044205">
    <property type="term" value="P:'de novo' UMP biosynthetic process"/>
    <property type="evidence" value="ECO:0007669"/>
    <property type="project" value="UniProtKB-UniRule"/>
</dbReference>
<dbReference type="CDD" id="cd06218">
    <property type="entry name" value="DHOD_e_trans"/>
    <property type="match status" value="1"/>
</dbReference>
<dbReference type="FunFam" id="2.10.240.10:FF:000001">
    <property type="entry name" value="Dihydroorotate dehydrogenase B (NAD(+)), electron transfer subunit"/>
    <property type="match status" value="1"/>
</dbReference>
<dbReference type="FunFam" id="2.40.30.10:FF:000045">
    <property type="entry name" value="Dihydroorotate dehydrogenase B (NAD(+)), electron transfer subunit"/>
    <property type="match status" value="1"/>
</dbReference>
<dbReference type="FunFam" id="3.40.50.80:FF:000017">
    <property type="entry name" value="Dihydroorotate dehydrogenase B (NAD(+)), electron transfer subunit"/>
    <property type="match status" value="1"/>
</dbReference>
<dbReference type="Gene3D" id="2.10.240.10">
    <property type="entry name" value="Dihydroorotate dehydrogenase, electron transfer subunit"/>
    <property type="match status" value="1"/>
</dbReference>
<dbReference type="Gene3D" id="3.40.50.80">
    <property type="entry name" value="Nucleotide-binding domain of ferredoxin-NADP reductase (FNR) module"/>
    <property type="match status" value="1"/>
</dbReference>
<dbReference type="Gene3D" id="2.40.30.10">
    <property type="entry name" value="Translation factors"/>
    <property type="match status" value="1"/>
</dbReference>
<dbReference type="HAMAP" id="MF_01211">
    <property type="entry name" value="DHODB_Fe_S_bind"/>
    <property type="match status" value="1"/>
</dbReference>
<dbReference type="InterPro" id="IPR012165">
    <property type="entry name" value="Cyt_c3_hydrogenase_gsu"/>
</dbReference>
<dbReference type="InterPro" id="IPR037117">
    <property type="entry name" value="Dihydroorotate_DH_ele_sf"/>
</dbReference>
<dbReference type="InterPro" id="IPR019480">
    <property type="entry name" value="Dihydroorotate_DH_Fe-S-bd"/>
</dbReference>
<dbReference type="InterPro" id="IPR023455">
    <property type="entry name" value="Dihydroorotate_DHASE_ETsu"/>
</dbReference>
<dbReference type="InterPro" id="IPR017927">
    <property type="entry name" value="FAD-bd_FR_type"/>
</dbReference>
<dbReference type="InterPro" id="IPR039261">
    <property type="entry name" value="FNR_nucleotide-bd"/>
</dbReference>
<dbReference type="InterPro" id="IPR001433">
    <property type="entry name" value="OxRdtase_FAD/NAD-bd"/>
</dbReference>
<dbReference type="InterPro" id="IPR050353">
    <property type="entry name" value="PyrK_electron_transfer"/>
</dbReference>
<dbReference type="InterPro" id="IPR017938">
    <property type="entry name" value="Riboflavin_synthase-like_b-brl"/>
</dbReference>
<dbReference type="NCBIfam" id="NF000797">
    <property type="entry name" value="PRK00054.1-2"/>
    <property type="match status" value="1"/>
</dbReference>
<dbReference type="NCBIfam" id="NF000799">
    <property type="entry name" value="PRK00054.1-4"/>
    <property type="match status" value="1"/>
</dbReference>
<dbReference type="PANTHER" id="PTHR43513">
    <property type="entry name" value="DIHYDROOROTATE DEHYDROGENASE B (NAD(+)), ELECTRON TRANSFER SUBUNIT"/>
    <property type="match status" value="1"/>
</dbReference>
<dbReference type="PANTHER" id="PTHR43513:SF3">
    <property type="entry name" value="DIHYDROOROTATE DEHYDROGENASE B (NAD(+)), ELECTRON TRANSFER SUBUNIT-RELATED"/>
    <property type="match status" value="1"/>
</dbReference>
<dbReference type="Pfam" id="PF10418">
    <property type="entry name" value="DHODB_Fe-S_bind"/>
    <property type="match status" value="1"/>
</dbReference>
<dbReference type="Pfam" id="PF00175">
    <property type="entry name" value="NAD_binding_1"/>
    <property type="match status" value="1"/>
</dbReference>
<dbReference type="PIRSF" id="PIRSF006816">
    <property type="entry name" value="Cyc3_hyd_g"/>
    <property type="match status" value="1"/>
</dbReference>
<dbReference type="PRINTS" id="PR00409">
    <property type="entry name" value="PHDIOXRDTASE"/>
</dbReference>
<dbReference type="SUPFAM" id="SSF52343">
    <property type="entry name" value="Ferredoxin reductase-like, C-terminal NADP-linked domain"/>
    <property type="match status" value="1"/>
</dbReference>
<dbReference type="SUPFAM" id="SSF63380">
    <property type="entry name" value="Riboflavin synthase domain-like"/>
    <property type="match status" value="1"/>
</dbReference>
<dbReference type="PROSITE" id="PS51384">
    <property type="entry name" value="FAD_FR"/>
    <property type="match status" value="1"/>
</dbReference>
<proteinExistence type="inferred from homology"/>
<comment type="function">
    <text evidence="1">Responsible for channeling the electrons from the oxidation of dihydroorotate from the FMN redox center in the PyrD type B subunit to the ultimate electron acceptor NAD(+).</text>
</comment>
<comment type="cofactor">
    <cofactor evidence="1">
        <name>[2Fe-2S] cluster</name>
        <dbReference type="ChEBI" id="CHEBI:190135"/>
    </cofactor>
    <text evidence="1">Binds 1 [2Fe-2S] cluster per subunit.</text>
</comment>
<comment type="cofactor">
    <cofactor evidence="1">
        <name>FAD</name>
        <dbReference type="ChEBI" id="CHEBI:57692"/>
    </cofactor>
    <text evidence="1">Binds 1 FAD per subunit.</text>
</comment>
<comment type="pathway">
    <text evidence="1">Pyrimidine metabolism; UMP biosynthesis via de novo pathway; orotate from (S)-dihydroorotate (NAD(+) route): step 1/1.</text>
</comment>
<comment type="subunit">
    <text evidence="1">Heterotetramer of 2 PyrK and 2 PyrD type B subunits.</text>
</comment>
<comment type="similarity">
    <text evidence="1">Belongs to the PyrK family.</text>
</comment>
<feature type="chain" id="PRO_1000164725" description="Dihydroorotate dehydrogenase B (NAD(+)), electron transfer subunit">
    <location>
        <begin position="1"/>
        <end position="259"/>
    </location>
</feature>
<feature type="domain" description="FAD-binding FR-type" evidence="1">
    <location>
        <begin position="2"/>
        <end position="102"/>
    </location>
</feature>
<feature type="binding site" evidence="1">
    <location>
        <begin position="53"/>
        <end position="56"/>
    </location>
    <ligand>
        <name>FAD</name>
        <dbReference type="ChEBI" id="CHEBI:57692"/>
    </ligand>
</feature>
<feature type="binding site" evidence="1">
    <location>
        <begin position="70"/>
        <end position="72"/>
    </location>
    <ligand>
        <name>FAD</name>
        <dbReference type="ChEBI" id="CHEBI:57692"/>
    </ligand>
</feature>
<feature type="binding site" evidence="1">
    <location>
        <begin position="77"/>
        <end position="78"/>
    </location>
    <ligand>
        <name>FAD</name>
        <dbReference type="ChEBI" id="CHEBI:57692"/>
    </ligand>
</feature>
<feature type="binding site" evidence="1">
    <location>
        <position position="221"/>
    </location>
    <ligand>
        <name>[2Fe-2S] cluster</name>
        <dbReference type="ChEBI" id="CHEBI:190135"/>
    </ligand>
</feature>
<feature type="binding site" evidence="1">
    <location>
        <position position="226"/>
    </location>
    <ligand>
        <name>[2Fe-2S] cluster</name>
        <dbReference type="ChEBI" id="CHEBI:190135"/>
    </ligand>
</feature>
<feature type="binding site" evidence="1">
    <location>
        <position position="229"/>
    </location>
    <ligand>
        <name>[2Fe-2S] cluster</name>
        <dbReference type="ChEBI" id="CHEBI:190135"/>
    </ligand>
</feature>
<feature type="binding site" evidence="1">
    <location>
        <position position="246"/>
    </location>
    <ligand>
        <name>[2Fe-2S] cluster</name>
        <dbReference type="ChEBI" id="CHEBI:190135"/>
    </ligand>
</feature>
<evidence type="ECO:0000255" key="1">
    <source>
        <dbReference type="HAMAP-Rule" id="MF_01211"/>
    </source>
</evidence>